<gene>
    <name type="primary">SPL</name>
    <name type="ordered locus">Os01g0100900</name>
    <name type="ordered locus">LOC_Os01g01080</name>
    <name evidence="4" type="ORF">OsJ_00009</name>
    <name type="ORF">P0402A09.4</name>
    <name type="ORF">P0672D08.8</name>
</gene>
<keyword id="KW-0053">Apoptosis</keyword>
<keyword id="KW-0256">Endoplasmic reticulum</keyword>
<keyword id="KW-0443">Lipid metabolism</keyword>
<keyword id="KW-0456">Lyase</keyword>
<keyword id="KW-0472">Membrane</keyword>
<keyword id="KW-0663">Pyridoxal phosphate</keyword>
<keyword id="KW-1185">Reference proteome</keyword>
<keyword id="KW-0732">Signal</keyword>
<keyword id="KW-0735">Signal-anchor</keyword>
<keyword id="KW-0746">Sphingolipid metabolism</keyword>
<keyword id="KW-0812">Transmembrane</keyword>
<keyword id="KW-1133">Transmembrane helix</keyword>
<sequence length="539" mass="58272">MELAMDFALRLRDAANHHLSRYEPLVLLAAPLLALLAARTLHAAAAAVADRGLRTVLLALAMTAIKLLPGVSAYINAEKRKVVDQLQSGGTSTKSTLRTELPTVGLSNQVINDLETLKARDVNWQGKCSGTVYIAGSESEGHFALINKAYSMFSHTNPLHQDVFKSVAQLEAEVVAMTAALLGIKEKSSGGQICGNMTSGGTESILLAVKTSRDYMRTKKGITKPEMIIAESAHSAYDKAAQYFNIKVRRVPVNKEFLADVKGFKRCINGNTIMMVGSAPGFPHGLIDPIEELGELASRYDICLHVDLCLGGFVLPFARKLGYPIPPFDFCVKGVTSISTDVHKYGLAPKGTSIVLYKNHEIRKHQFVAVTEWTGGLYVSPTIAGSRPGGLIAGAWAAMTSLGLNGYMENTGHIMEVSKKIQRGIEDIPGLFVIGKPDMTVVAFGSDSVDIFEVNDIMSSKGWHLNALQRPNSLHICVTLQHTVIYEEFLKDLKDSVDTVKANPGPISGGRAPIYGAAGKMPDRGMVRELLVEFMDASC</sequence>
<feature type="signal peptide" evidence="2">
    <location>
        <begin position="1"/>
        <end position="46"/>
    </location>
</feature>
<feature type="chain" id="PRO_0000247464" description="Sphingosine-1-phosphate lyase">
    <location>
        <begin position="47"/>
        <end position="539"/>
    </location>
</feature>
<feature type="topological domain" description="Lumenal" evidence="2">
    <location>
        <begin position="47"/>
        <end position="54"/>
    </location>
</feature>
<feature type="transmembrane region" description="Helical" evidence="2">
    <location>
        <begin position="55"/>
        <end position="75"/>
    </location>
</feature>
<feature type="topological domain" description="Cytoplasmic" evidence="2">
    <location>
        <begin position="76"/>
        <end position="539"/>
    </location>
</feature>
<feature type="modified residue" description="N6-(pyridoxal phosphate)lysine" evidence="1">
    <location>
        <position position="344"/>
    </location>
</feature>
<organism>
    <name type="scientific">Oryza sativa subsp. japonica</name>
    <name type="common">Rice</name>
    <dbReference type="NCBI Taxonomy" id="39947"/>
    <lineage>
        <taxon>Eukaryota</taxon>
        <taxon>Viridiplantae</taxon>
        <taxon>Streptophyta</taxon>
        <taxon>Embryophyta</taxon>
        <taxon>Tracheophyta</taxon>
        <taxon>Spermatophyta</taxon>
        <taxon>Magnoliopsida</taxon>
        <taxon>Liliopsida</taxon>
        <taxon>Poales</taxon>
        <taxon>Poaceae</taxon>
        <taxon>BOP clade</taxon>
        <taxon>Oryzoideae</taxon>
        <taxon>Oryzeae</taxon>
        <taxon>Oryzinae</taxon>
        <taxon>Oryza</taxon>
        <taxon>Oryza sativa</taxon>
    </lineage>
</organism>
<proteinExistence type="evidence at transcript level"/>
<protein>
    <recommendedName>
        <fullName>Sphingosine-1-phosphate lyase</fullName>
        <shortName>S1PL</shortName>
        <shortName>SP-lyase</shortName>
        <shortName>SPL</shortName>
        <ecNumber>4.1.2.27</ecNumber>
    </recommendedName>
    <alternativeName>
        <fullName>Sphingosine-1-phosphate aldolase</fullName>
    </alternativeName>
</protein>
<comment type="function">
    <text evidence="1">Cleaves phosphorylated sphingoid bases (PSBs), such as sphingosine-1-phosphate, into fatty aldehydes and phosphoethanolamine. Elevates stress-induced ceramide production and apoptosis (By similarity).</text>
</comment>
<comment type="catalytic activity">
    <reaction>
        <text>sphinganine 1-phosphate = hexadecanal + phosphoethanolamine</text>
        <dbReference type="Rhea" id="RHEA:18593"/>
        <dbReference type="ChEBI" id="CHEBI:17600"/>
        <dbReference type="ChEBI" id="CHEBI:57939"/>
        <dbReference type="ChEBI" id="CHEBI:58190"/>
        <dbReference type="EC" id="4.1.2.27"/>
    </reaction>
</comment>
<comment type="cofactor">
    <cofactor evidence="1">
        <name>pyridoxal 5'-phosphate</name>
        <dbReference type="ChEBI" id="CHEBI:597326"/>
    </cofactor>
</comment>
<comment type="pathway">
    <text>Lipid metabolism; sphingolipid metabolism.</text>
</comment>
<comment type="subcellular location">
    <subcellularLocation>
        <location evidence="1">Endoplasmic reticulum membrane</location>
        <topology evidence="1">Single-pass type III membrane protein</topology>
    </subcellularLocation>
</comment>
<comment type="similarity">
    <text evidence="3">Belongs to the group II decarboxylase family. Sphingosine-1-phosphate lyase subfamily.</text>
</comment>
<comment type="sequence caution" evidence="3">
    <conflict type="erroneous gene model prediction">
        <sequence resource="EMBL-CDS" id="BAB62623"/>
    </conflict>
</comment>
<comment type="sequence caution" evidence="3">
    <conflict type="erroneous gene model prediction">
        <sequence resource="EMBL-CDS" id="BAD45497"/>
    </conflict>
</comment>
<reference key="1">
    <citation type="submission" date="2005-03" db="EMBL/GenBank/DDBJ databases">
        <title>Molecular and functional analysis of putative sphingosine-1-phosphate lyases from Arabidopsis thaliana and rice.</title>
        <authorList>
            <person name="Niu Y."/>
            <person name="Wang J."/>
            <person name="Liu K."/>
            <person name="Wang D."/>
        </authorList>
    </citation>
    <scope>NUCLEOTIDE SEQUENCE [MRNA]</scope>
    <source>
        <strain>cv. Nipponbare</strain>
    </source>
</reference>
<reference key="2">
    <citation type="journal article" date="2002" name="Nature">
        <title>The genome sequence and structure of rice chromosome 1.</title>
        <authorList>
            <person name="Sasaki T."/>
            <person name="Matsumoto T."/>
            <person name="Yamamoto K."/>
            <person name="Sakata K."/>
            <person name="Baba T."/>
            <person name="Katayose Y."/>
            <person name="Wu J."/>
            <person name="Niimura Y."/>
            <person name="Cheng Z."/>
            <person name="Nagamura Y."/>
            <person name="Antonio B.A."/>
            <person name="Kanamori H."/>
            <person name="Hosokawa S."/>
            <person name="Masukawa M."/>
            <person name="Arikawa K."/>
            <person name="Chiden Y."/>
            <person name="Hayashi M."/>
            <person name="Okamoto M."/>
            <person name="Ando T."/>
            <person name="Aoki H."/>
            <person name="Arita K."/>
            <person name="Hamada M."/>
            <person name="Harada C."/>
            <person name="Hijishita S."/>
            <person name="Honda M."/>
            <person name="Ichikawa Y."/>
            <person name="Idonuma A."/>
            <person name="Iijima M."/>
            <person name="Ikeda M."/>
            <person name="Ikeno M."/>
            <person name="Ito S."/>
            <person name="Ito T."/>
            <person name="Ito Y."/>
            <person name="Ito Y."/>
            <person name="Iwabuchi A."/>
            <person name="Kamiya K."/>
            <person name="Karasawa W."/>
            <person name="Katagiri S."/>
            <person name="Kikuta A."/>
            <person name="Kobayashi N."/>
            <person name="Kono I."/>
            <person name="Machita K."/>
            <person name="Maehara T."/>
            <person name="Mizuno H."/>
            <person name="Mizubayashi T."/>
            <person name="Mukai Y."/>
            <person name="Nagasaki H."/>
            <person name="Nakashima M."/>
            <person name="Nakama Y."/>
            <person name="Nakamichi Y."/>
            <person name="Nakamura M."/>
            <person name="Namiki N."/>
            <person name="Negishi M."/>
            <person name="Ohta I."/>
            <person name="Ono N."/>
            <person name="Saji S."/>
            <person name="Sakai K."/>
            <person name="Shibata M."/>
            <person name="Shimokawa T."/>
            <person name="Shomura A."/>
            <person name="Song J."/>
            <person name="Takazaki Y."/>
            <person name="Terasawa K."/>
            <person name="Tsuji K."/>
            <person name="Waki K."/>
            <person name="Yamagata H."/>
            <person name="Yamane H."/>
            <person name="Yoshiki S."/>
            <person name="Yoshihara R."/>
            <person name="Yukawa K."/>
            <person name="Zhong H."/>
            <person name="Iwama H."/>
            <person name="Endo T."/>
            <person name="Ito H."/>
            <person name="Hahn J.H."/>
            <person name="Kim H.-I."/>
            <person name="Eun M.-Y."/>
            <person name="Yano M."/>
            <person name="Jiang J."/>
            <person name="Gojobori T."/>
        </authorList>
    </citation>
    <scope>NUCLEOTIDE SEQUENCE [LARGE SCALE GENOMIC DNA]</scope>
    <source>
        <strain>cv. Nipponbare</strain>
    </source>
</reference>
<reference key="3">
    <citation type="journal article" date="2005" name="Nature">
        <title>The map-based sequence of the rice genome.</title>
        <authorList>
            <consortium name="International rice genome sequencing project (IRGSP)"/>
        </authorList>
    </citation>
    <scope>NUCLEOTIDE SEQUENCE [LARGE SCALE GENOMIC DNA]</scope>
    <source>
        <strain>cv. Nipponbare</strain>
    </source>
</reference>
<reference key="4">
    <citation type="journal article" date="2008" name="Nucleic Acids Res.">
        <title>The rice annotation project database (RAP-DB): 2008 update.</title>
        <authorList>
            <consortium name="The rice annotation project (RAP)"/>
        </authorList>
    </citation>
    <scope>GENOME REANNOTATION</scope>
    <source>
        <strain>cv. Nipponbare</strain>
    </source>
</reference>
<reference key="5">
    <citation type="journal article" date="2013" name="Rice">
        <title>Improvement of the Oryza sativa Nipponbare reference genome using next generation sequence and optical map data.</title>
        <authorList>
            <person name="Kawahara Y."/>
            <person name="de la Bastide M."/>
            <person name="Hamilton J.P."/>
            <person name="Kanamori H."/>
            <person name="McCombie W.R."/>
            <person name="Ouyang S."/>
            <person name="Schwartz D.C."/>
            <person name="Tanaka T."/>
            <person name="Wu J."/>
            <person name="Zhou S."/>
            <person name="Childs K.L."/>
            <person name="Davidson R.M."/>
            <person name="Lin H."/>
            <person name="Quesada-Ocampo L."/>
            <person name="Vaillancourt B."/>
            <person name="Sakai H."/>
            <person name="Lee S.S."/>
            <person name="Kim J."/>
            <person name="Numa H."/>
            <person name="Itoh T."/>
            <person name="Buell C.R."/>
            <person name="Matsumoto T."/>
        </authorList>
    </citation>
    <scope>GENOME REANNOTATION</scope>
    <source>
        <strain>cv. Nipponbare</strain>
    </source>
</reference>
<reference key="6">
    <citation type="journal article" date="2005" name="PLoS Biol.">
        <title>The genomes of Oryza sativa: a history of duplications.</title>
        <authorList>
            <person name="Yu J."/>
            <person name="Wang J."/>
            <person name="Lin W."/>
            <person name="Li S."/>
            <person name="Li H."/>
            <person name="Zhou J."/>
            <person name="Ni P."/>
            <person name="Dong W."/>
            <person name="Hu S."/>
            <person name="Zeng C."/>
            <person name="Zhang J."/>
            <person name="Zhang Y."/>
            <person name="Li R."/>
            <person name="Xu Z."/>
            <person name="Li S."/>
            <person name="Li X."/>
            <person name="Zheng H."/>
            <person name="Cong L."/>
            <person name="Lin L."/>
            <person name="Yin J."/>
            <person name="Geng J."/>
            <person name="Li G."/>
            <person name="Shi J."/>
            <person name="Liu J."/>
            <person name="Lv H."/>
            <person name="Li J."/>
            <person name="Wang J."/>
            <person name="Deng Y."/>
            <person name="Ran L."/>
            <person name="Shi X."/>
            <person name="Wang X."/>
            <person name="Wu Q."/>
            <person name="Li C."/>
            <person name="Ren X."/>
            <person name="Wang J."/>
            <person name="Wang X."/>
            <person name="Li D."/>
            <person name="Liu D."/>
            <person name="Zhang X."/>
            <person name="Ji Z."/>
            <person name="Zhao W."/>
            <person name="Sun Y."/>
            <person name="Zhang Z."/>
            <person name="Bao J."/>
            <person name="Han Y."/>
            <person name="Dong L."/>
            <person name="Ji J."/>
            <person name="Chen P."/>
            <person name="Wu S."/>
            <person name="Liu J."/>
            <person name="Xiao Y."/>
            <person name="Bu D."/>
            <person name="Tan J."/>
            <person name="Yang L."/>
            <person name="Ye C."/>
            <person name="Zhang J."/>
            <person name="Xu J."/>
            <person name="Zhou Y."/>
            <person name="Yu Y."/>
            <person name="Zhang B."/>
            <person name="Zhuang S."/>
            <person name="Wei H."/>
            <person name="Liu B."/>
            <person name="Lei M."/>
            <person name="Yu H."/>
            <person name="Li Y."/>
            <person name="Xu H."/>
            <person name="Wei S."/>
            <person name="He X."/>
            <person name="Fang L."/>
            <person name="Zhang Z."/>
            <person name="Zhang Y."/>
            <person name="Huang X."/>
            <person name="Su Z."/>
            <person name="Tong W."/>
            <person name="Li J."/>
            <person name="Tong Z."/>
            <person name="Li S."/>
            <person name="Ye J."/>
            <person name="Wang L."/>
            <person name="Fang L."/>
            <person name="Lei T."/>
            <person name="Chen C.-S."/>
            <person name="Chen H.-C."/>
            <person name="Xu Z."/>
            <person name="Li H."/>
            <person name="Huang H."/>
            <person name="Zhang F."/>
            <person name="Xu H."/>
            <person name="Li N."/>
            <person name="Zhao C."/>
            <person name="Li S."/>
            <person name="Dong L."/>
            <person name="Huang Y."/>
            <person name="Li L."/>
            <person name="Xi Y."/>
            <person name="Qi Q."/>
            <person name="Li W."/>
            <person name="Zhang B."/>
            <person name="Hu W."/>
            <person name="Zhang Y."/>
            <person name="Tian X."/>
            <person name="Jiao Y."/>
            <person name="Liang X."/>
            <person name="Jin J."/>
            <person name="Gao L."/>
            <person name="Zheng W."/>
            <person name="Hao B."/>
            <person name="Liu S.-M."/>
            <person name="Wang W."/>
            <person name="Yuan L."/>
            <person name="Cao M."/>
            <person name="McDermott J."/>
            <person name="Samudrala R."/>
            <person name="Wang J."/>
            <person name="Wong G.K.-S."/>
            <person name="Yang H."/>
        </authorList>
    </citation>
    <scope>NUCLEOTIDE SEQUENCE [LARGE SCALE GENOMIC DNA]</scope>
    <source>
        <strain>cv. Nipponbare</strain>
    </source>
</reference>
<reference key="7">
    <citation type="submission" date="2006-10" db="EMBL/GenBank/DDBJ databases">
        <title>Oryza sativa full length cDNA.</title>
        <authorList>
            <consortium name="The rice full-length cDNA consortium"/>
        </authorList>
    </citation>
    <scope>NUCLEOTIDE SEQUENCE [LARGE SCALE MRNA]</scope>
    <source>
        <strain>cv. Nipponbare</strain>
    </source>
</reference>
<name>SGPL_ORYSJ</name>
<accession>Q52RG7</accession>
<accession>B7FAK6</accession>
<accession>Q0JRH4</accession>
<accession>Q655L2</accession>
<accession>Q7F2G0</accession>
<evidence type="ECO:0000250" key="1"/>
<evidence type="ECO:0000255" key="2"/>
<evidence type="ECO:0000305" key="3"/>
<evidence type="ECO:0000312" key="4">
    <source>
        <dbReference type="EMBL" id="EEE53694.1"/>
    </source>
</evidence>
<dbReference type="EC" id="4.1.2.27"/>
<dbReference type="EMBL" id="AY972084">
    <property type="protein sequence ID" value="AAX89367.1"/>
    <property type="molecule type" value="mRNA"/>
</dbReference>
<dbReference type="EMBL" id="AP003610">
    <property type="protein sequence ID" value="BAB62623.1"/>
    <property type="status" value="ALT_SEQ"/>
    <property type="molecule type" value="Genomic_DNA"/>
</dbReference>
<dbReference type="EMBL" id="AP003727">
    <property type="protein sequence ID" value="BAD45497.1"/>
    <property type="status" value="ALT_SEQ"/>
    <property type="molecule type" value="Genomic_DNA"/>
</dbReference>
<dbReference type="EMBL" id="AP008207">
    <property type="protein sequence ID" value="BAF03654.2"/>
    <property type="molecule type" value="Genomic_DNA"/>
</dbReference>
<dbReference type="EMBL" id="AP014957">
    <property type="protein sequence ID" value="BAS69918.1"/>
    <property type="molecule type" value="Genomic_DNA"/>
</dbReference>
<dbReference type="EMBL" id="CM000138">
    <property type="protein sequence ID" value="EEE53694.1"/>
    <property type="molecule type" value="Genomic_DNA"/>
</dbReference>
<dbReference type="EMBL" id="AK243573">
    <property type="protein sequence ID" value="BAH01654.1"/>
    <property type="molecule type" value="mRNA"/>
</dbReference>
<dbReference type="RefSeq" id="XP_015621818.1">
    <property type="nucleotide sequence ID" value="XM_015766332.1"/>
</dbReference>
<dbReference type="SMR" id="Q52RG7"/>
<dbReference type="FunCoup" id="Q52RG7">
    <property type="interactions" value="2413"/>
</dbReference>
<dbReference type="STRING" id="39947.Q52RG7"/>
<dbReference type="PaxDb" id="39947-Q52RG7"/>
<dbReference type="EnsemblPlants" id="Os01t0100900-01">
    <property type="protein sequence ID" value="Os01t0100900-01"/>
    <property type="gene ID" value="Os01g0100900"/>
</dbReference>
<dbReference type="Gramene" id="Os01t0100900-01">
    <property type="protein sequence ID" value="Os01t0100900-01"/>
    <property type="gene ID" value="Os01g0100900"/>
</dbReference>
<dbReference type="KEGG" id="dosa:Os01g0100900"/>
<dbReference type="eggNOG" id="KOG1383">
    <property type="taxonomic scope" value="Eukaryota"/>
</dbReference>
<dbReference type="InParanoid" id="Q52RG7"/>
<dbReference type="OMA" id="FKDHQFT"/>
<dbReference type="OrthoDB" id="10254570at2759"/>
<dbReference type="PlantReactome" id="R-OSA-1119325">
    <property type="pathway name" value="Sphingolipid metabolism"/>
</dbReference>
<dbReference type="UniPathway" id="UPA00222"/>
<dbReference type="Proteomes" id="UP000000763">
    <property type="component" value="Chromosome 1"/>
</dbReference>
<dbReference type="Proteomes" id="UP000007752">
    <property type="component" value="Chromosome 1"/>
</dbReference>
<dbReference type="Proteomes" id="UP000059680">
    <property type="component" value="Chromosome 1"/>
</dbReference>
<dbReference type="GO" id="GO:0005783">
    <property type="term" value="C:endoplasmic reticulum"/>
    <property type="evidence" value="ECO:0000318"/>
    <property type="project" value="GO_Central"/>
</dbReference>
<dbReference type="GO" id="GO:0005789">
    <property type="term" value="C:endoplasmic reticulum membrane"/>
    <property type="evidence" value="ECO:0007669"/>
    <property type="project" value="UniProtKB-SubCell"/>
</dbReference>
<dbReference type="GO" id="GO:0030170">
    <property type="term" value="F:pyridoxal phosphate binding"/>
    <property type="evidence" value="ECO:0007669"/>
    <property type="project" value="InterPro"/>
</dbReference>
<dbReference type="GO" id="GO:0008117">
    <property type="term" value="F:sphinganine-1-phosphate aldolase activity"/>
    <property type="evidence" value="ECO:0000318"/>
    <property type="project" value="GO_Central"/>
</dbReference>
<dbReference type="GO" id="GO:0019752">
    <property type="term" value="P:carboxylic acid metabolic process"/>
    <property type="evidence" value="ECO:0007669"/>
    <property type="project" value="InterPro"/>
</dbReference>
<dbReference type="GO" id="GO:0030149">
    <property type="term" value="P:sphingolipid catabolic process"/>
    <property type="evidence" value="ECO:0000318"/>
    <property type="project" value="GO_Central"/>
</dbReference>
<dbReference type="FunFam" id="3.90.1150.10:FF:000020">
    <property type="entry name" value="Sphingosine-1-phosphate lyase 1"/>
    <property type="match status" value="1"/>
</dbReference>
<dbReference type="FunFam" id="6.10.140.2150:FF:000001">
    <property type="entry name" value="Sphingosine-1-phosphate lyase 1"/>
    <property type="match status" value="1"/>
</dbReference>
<dbReference type="FunFam" id="3.40.640.10:FF:000020">
    <property type="entry name" value="sphingosine-1-phosphate lyase 1"/>
    <property type="match status" value="1"/>
</dbReference>
<dbReference type="Gene3D" id="6.10.140.2150">
    <property type="match status" value="1"/>
</dbReference>
<dbReference type="Gene3D" id="3.90.1150.10">
    <property type="entry name" value="Aspartate Aminotransferase, domain 1"/>
    <property type="match status" value="1"/>
</dbReference>
<dbReference type="Gene3D" id="3.40.640.10">
    <property type="entry name" value="Type I PLP-dependent aspartate aminotransferase-like (Major domain)"/>
    <property type="match status" value="1"/>
</dbReference>
<dbReference type="InterPro" id="IPR050477">
    <property type="entry name" value="GrpII_AminoAcid_Decarb"/>
</dbReference>
<dbReference type="InterPro" id="IPR002129">
    <property type="entry name" value="PyrdxlP-dep_de-COase"/>
</dbReference>
<dbReference type="InterPro" id="IPR015424">
    <property type="entry name" value="PyrdxlP-dep_Trfase"/>
</dbReference>
<dbReference type="InterPro" id="IPR015421">
    <property type="entry name" value="PyrdxlP-dep_Trfase_major"/>
</dbReference>
<dbReference type="InterPro" id="IPR015422">
    <property type="entry name" value="PyrdxlP-dep_Trfase_small"/>
</dbReference>
<dbReference type="PANTHER" id="PTHR42735">
    <property type="match status" value="1"/>
</dbReference>
<dbReference type="PANTHER" id="PTHR42735:SF6">
    <property type="entry name" value="SPHINGOSINE-1-PHOSPHATE LYASE 1"/>
    <property type="match status" value="1"/>
</dbReference>
<dbReference type="Pfam" id="PF00282">
    <property type="entry name" value="Pyridoxal_deC"/>
    <property type="match status" value="1"/>
</dbReference>
<dbReference type="SUPFAM" id="SSF53383">
    <property type="entry name" value="PLP-dependent transferases"/>
    <property type="match status" value="1"/>
</dbReference>